<sequence length="475" mass="54271">MAAKSQPSAPKTKSTSGLTNGNAAAQGQWGRAWEVDWFSLASVIFLLLFAPFIVYYFIMACDQYGCSLTVPVADLATGRARLADIWARTPPVTAKAAQIYTAWVTLQVLLYMLLPDFCHKFLPGYVGGVQEGAVTPAGAVNKYEINGLQAWLLTHLLWFANAHLLGWFSPTIIFDNWIPLLWCANILGYTVSTFAMVKGYLFPTDARECKFTGNFFYNYMMGVEFNPRIGKWFDFKLFFNGRPGIVAWTLINLSFAAKQQELYGHVTNSMVLVNILQAIYVLDFFWNETWYLKTIDICHDHFGWYLGWGDCVWLPYLYTLQGLYLVYHPVQLPTYYALGVLLLGLLGYYIFRMTNHQKDLFRRTDGRCLIWGRKPKAIECSYTSADGQRHHSKLLVSGFWGVARHFNYTGDLMGSLAYCLACGGGHLLPYFYIIFMAILLTHRCLRDEHRCANKYGRDWEHYTAAVPYRLLPGIF</sequence>
<feature type="chain" id="PRO_0000207501" description="7-dehydrocholesterol reductase">
    <location>
        <begin position="1"/>
        <end position="475"/>
    </location>
</feature>
<feature type="transmembrane region" description="Helical" evidence="4">
    <location>
        <begin position="40"/>
        <end position="60"/>
    </location>
</feature>
<feature type="transmembrane region" description="Helical" evidence="4">
    <location>
        <begin position="151"/>
        <end position="173"/>
    </location>
</feature>
<feature type="transmembrane region" description="Helical" evidence="4">
    <location>
        <begin position="178"/>
        <end position="200"/>
    </location>
</feature>
<feature type="transmembrane region" description="Helical" evidence="4">
    <location>
        <begin position="266"/>
        <end position="286"/>
    </location>
</feature>
<feature type="transmembrane region" description="Helical" evidence="4">
    <location>
        <begin position="306"/>
        <end position="326"/>
    </location>
</feature>
<feature type="transmembrane region" description="Helical" evidence="4">
    <location>
        <begin position="331"/>
        <end position="351"/>
    </location>
</feature>
<feature type="transmembrane region" description="Helical" evidence="4">
    <location>
        <begin position="420"/>
        <end position="440"/>
    </location>
</feature>
<feature type="region of interest" description="Disordered" evidence="5">
    <location>
        <begin position="1"/>
        <end position="21"/>
    </location>
</feature>
<feature type="binding site" evidence="1">
    <location>
        <position position="358"/>
    </location>
    <ligand>
        <name>NADP(+)</name>
        <dbReference type="ChEBI" id="CHEBI:58349"/>
    </ligand>
</feature>
<feature type="binding site" evidence="1">
    <location>
        <position position="362"/>
    </location>
    <ligand>
        <name>NADP(+)</name>
        <dbReference type="ChEBI" id="CHEBI:58349"/>
    </ligand>
</feature>
<feature type="binding site" evidence="1">
    <location>
        <position position="395"/>
    </location>
    <ligand>
        <name>NADP(+)</name>
        <dbReference type="ChEBI" id="CHEBI:58349"/>
    </ligand>
</feature>
<feature type="binding site" evidence="1">
    <location>
        <position position="400"/>
    </location>
    <ligand>
        <name>NADP(+)</name>
        <dbReference type="ChEBI" id="CHEBI:58349"/>
    </ligand>
</feature>
<feature type="binding site" evidence="1">
    <location>
        <begin position="407"/>
        <end position="408"/>
    </location>
    <ligand>
        <name>NADP(+)</name>
        <dbReference type="ChEBI" id="CHEBI:58349"/>
    </ligand>
</feature>
<feature type="binding site" evidence="1">
    <location>
        <position position="447"/>
    </location>
    <ligand>
        <name>NADP(+)</name>
        <dbReference type="ChEBI" id="CHEBI:58349"/>
    </ligand>
</feature>
<feature type="binding site" evidence="1">
    <location>
        <begin position="451"/>
        <end position="455"/>
    </location>
    <ligand>
        <name>NADP(+)</name>
        <dbReference type="ChEBI" id="CHEBI:58349"/>
    </ligand>
</feature>
<feature type="binding site" evidence="1">
    <location>
        <position position="462"/>
    </location>
    <ligand>
        <name>NADP(+)</name>
        <dbReference type="ChEBI" id="CHEBI:58349"/>
    </ligand>
</feature>
<feature type="modified residue" description="Phosphoserine" evidence="3">
    <location>
        <position position="14"/>
    </location>
</feature>
<reference key="1">
    <citation type="journal article" date="2005" name="BMC Genomics">
        <title>Characterization of 954 bovine full-CDS cDNA sequences.</title>
        <authorList>
            <person name="Harhay G.P."/>
            <person name="Sonstegard T.S."/>
            <person name="Keele J.W."/>
            <person name="Heaton M.P."/>
            <person name="Clawson M.L."/>
            <person name="Snelling W.M."/>
            <person name="Wiedmann R.T."/>
            <person name="Van Tassell C.P."/>
            <person name="Smith T.P.L."/>
        </authorList>
    </citation>
    <scope>NUCLEOTIDE SEQUENCE [LARGE SCALE MRNA]</scope>
</reference>
<reference key="2">
    <citation type="submission" date="2007-07" db="EMBL/GenBank/DDBJ databases">
        <authorList>
            <consortium name="NIH - Mammalian Gene Collection (MGC) project"/>
        </authorList>
    </citation>
    <scope>NUCLEOTIDE SEQUENCE [LARGE SCALE MRNA]</scope>
    <source>
        <strain>Hereford</strain>
        <tissue>Fetal skin</tissue>
    </source>
</reference>
<gene>
    <name type="primary">DHCR7</name>
</gene>
<comment type="function">
    <text evidence="2 3">Oxidoreductase that catalyzes the last step of the cholesterol synthesis pathway, which transforms cholesta-5,7-dien-3beta-ol (7-dehydrocholesterol,7-DHC) into cholesterol by reducing the C7-C8 double bond of its sterol core (By similarity). Can also metabolize cholesta-5,7,24-trien-3beta-ol (7-dehydrodemosterol, 7-DHD) to desmosterol, which is then metabolized by the Delta(24)-sterol reductase (DHCR24) to cholesterol (By similarity). Modulates ferroptosis (a form of regulated cell death driven by iron-dependent lipid peroxidation) through the metabolic breakdown of the anti-ferroptotic metabolites 7-DHC and 7-DHD which, when accumulated, divert the propagation of peroxyl radical-mediated damage from phospholipid components to its sterol core, protecting plasma and mitochondrial membranes from phospholipid autoxidation (By similarity).</text>
</comment>
<comment type="function">
    <text evidence="3">Component of the microsomal antiestrogen binding site (AEBS), a multiproteic complex at the ER membrane that consists of an association between cholestenol Delta-isomerase/EBP and DHCR7. This complex is responsible for cholesterol-5,6-epoxide hydrolase (ChEH) activity, which consists in the hydration of cholesterol-5,6-epoxides (5,6-EC) into cholestane-3beta,5alpha,6beta-triol (CT). The precise role of each component of this complex has not been described yet.</text>
</comment>
<comment type="catalytic activity">
    <reaction evidence="3">
        <text>cholesterol + NADP(+) = 7-dehydrocholesterol + NADPH + H(+)</text>
        <dbReference type="Rhea" id="RHEA:23984"/>
        <dbReference type="ChEBI" id="CHEBI:15378"/>
        <dbReference type="ChEBI" id="CHEBI:16113"/>
        <dbReference type="ChEBI" id="CHEBI:17759"/>
        <dbReference type="ChEBI" id="CHEBI:57783"/>
        <dbReference type="ChEBI" id="CHEBI:58349"/>
        <dbReference type="EC" id="1.3.1.21"/>
    </reaction>
    <physiologicalReaction direction="right-to-left" evidence="3">
        <dbReference type="Rhea" id="RHEA:23986"/>
    </physiologicalReaction>
</comment>
<comment type="catalytic activity">
    <reaction evidence="2">
        <text>7-dehydrodesmosterol + NADPH + H(+) = desmosterol + NADP(+)</text>
        <dbReference type="Rhea" id="RHEA:46740"/>
        <dbReference type="ChEBI" id="CHEBI:15378"/>
        <dbReference type="ChEBI" id="CHEBI:17737"/>
        <dbReference type="ChEBI" id="CHEBI:27910"/>
        <dbReference type="ChEBI" id="CHEBI:57783"/>
        <dbReference type="ChEBI" id="CHEBI:58349"/>
    </reaction>
    <physiologicalReaction direction="left-to-right" evidence="2">
        <dbReference type="Rhea" id="RHEA:46741"/>
    </physiologicalReaction>
</comment>
<comment type="catalytic activity">
    <reaction evidence="3">
        <text>5,6alpha-epoxy-5alpha-cholestan-3beta-ol + H2O = 5alpha-cholestane-3beta,5,6beta-triol</text>
        <dbReference type="Rhea" id="RHEA:11964"/>
        <dbReference type="ChEBI" id="CHEBI:15377"/>
        <dbReference type="ChEBI" id="CHEBI:28082"/>
        <dbReference type="ChEBI" id="CHEBI:49305"/>
        <dbReference type="EC" id="3.3.2.11"/>
    </reaction>
    <physiologicalReaction direction="left-to-right" evidence="3">
        <dbReference type="Rhea" id="RHEA:11965"/>
    </physiologicalReaction>
</comment>
<comment type="catalytic activity">
    <reaction evidence="3">
        <text>5,6beta-epoxy-5beta-cholestan-3beta-ol + H2O = 5alpha-cholestane-3beta,5,6beta-triol</text>
        <dbReference type="Rhea" id="RHEA:15113"/>
        <dbReference type="ChEBI" id="CHEBI:15377"/>
        <dbReference type="ChEBI" id="CHEBI:28082"/>
        <dbReference type="ChEBI" id="CHEBI:28164"/>
        <dbReference type="EC" id="3.3.2.11"/>
    </reaction>
    <physiologicalReaction direction="left-to-right" evidence="3">
        <dbReference type="Rhea" id="RHEA:15114"/>
    </physiologicalReaction>
</comment>
<comment type="pathway">
    <text evidence="2">Steroid biosynthesis; cholesterol biosynthesis.</text>
</comment>
<comment type="subunit">
    <text evidence="3">Interacts with DHCR24; this interaction regulates DHCR7 activity. Interacts with TMEM147.</text>
</comment>
<comment type="subcellular location">
    <subcellularLocation>
        <location evidence="3">Endoplasmic reticulum membrane</location>
        <topology evidence="4">Multi-pass membrane protein</topology>
    </subcellularLocation>
</comment>
<comment type="similarity">
    <text evidence="6">Belongs to the ERG4/ERG24 family.</text>
</comment>
<organism>
    <name type="scientific">Bos taurus</name>
    <name type="common">Bovine</name>
    <dbReference type="NCBI Taxonomy" id="9913"/>
    <lineage>
        <taxon>Eukaryota</taxon>
        <taxon>Metazoa</taxon>
        <taxon>Chordata</taxon>
        <taxon>Craniata</taxon>
        <taxon>Vertebrata</taxon>
        <taxon>Euteleostomi</taxon>
        <taxon>Mammalia</taxon>
        <taxon>Eutheria</taxon>
        <taxon>Laurasiatheria</taxon>
        <taxon>Artiodactyla</taxon>
        <taxon>Ruminantia</taxon>
        <taxon>Pecora</taxon>
        <taxon>Bovidae</taxon>
        <taxon>Bovinae</taxon>
        <taxon>Bos</taxon>
    </lineage>
</organism>
<accession>Q5E9J5</accession>
<accession>A6QR24</accession>
<proteinExistence type="evidence at transcript level"/>
<name>DHCR7_BOVIN</name>
<evidence type="ECO:0000250" key="1">
    <source>
        <dbReference type="UniProtKB" id="G4SW86"/>
    </source>
</evidence>
<evidence type="ECO:0000250" key="2">
    <source>
        <dbReference type="UniProtKB" id="O88455"/>
    </source>
</evidence>
<evidence type="ECO:0000250" key="3">
    <source>
        <dbReference type="UniProtKB" id="Q9UBM7"/>
    </source>
</evidence>
<evidence type="ECO:0000255" key="4"/>
<evidence type="ECO:0000256" key="5">
    <source>
        <dbReference type="SAM" id="MobiDB-lite"/>
    </source>
</evidence>
<evidence type="ECO:0000305" key="6"/>
<dbReference type="EC" id="1.3.1.21" evidence="2"/>
<dbReference type="EC" id="3.3.2.11" evidence="3"/>
<dbReference type="EMBL" id="BT020925">
    <property type="protein sequence ID" value="AAX08942.1"/>
    <property type="molecule type" value="mRNA"/>
</dbReference>
<dbReference type="EMBL" id="BC150084">
    <property type="protein sequence ID" value="AAI50085.1"/>
    <property type="molecule type" value="mRNA"/>
</dbReference>
<dbReference type="RefSeq" id="NP_001014927.1">
    <property type="nucleotide sequence ID" value="NM_001014927.2"/>
</dbReference>
<dbReference type="RefSeq" id="XP_015316829.1">
    <property type="nucleotide sequence ID" value="XM_015461343.1"/>
</dbReference>
<dbReference type="RefSeq" id="XP_024842887.1">
    <property type="nucleotide sequence ID" value="XM_024987119.2"/>
</dbReference>
<dbReference type="RefSeq" id="XP_024842888.1">
    <property type="nucleotide sequence ID" value="XM_024987120.2"/>
</dbReference>
<dbReference type="RefSeq" id="XP_024842889.1">
    <property type="nucleotide sequence ID" value="XM_024987121.2"/>
</dbReference>
<dbReference type="RefSeq" id="XP_024842890.1">
    <property type="nucleotide sequence ID" value="XM_024987122.2"/>
</dbReference>
<dbReference type="RefSeq" id="XP_059738887.1">
    <property type="nucleotide sequence ID" value="XM_059882904.1"/>
</dbReference>
<dbReference type="RefSeq" id="XP_059738888.1">
    <property type="nucleotide sequence ID" value="XM_059882905.1"/>
</dbReference>
<dbReference type="SMR" id="Q5E9J5"/>
<dbReference type="FunCoup" id="Q5E9J5">
    <property type="interactions" value="865"/>
</dbReference>
<dbReference type="STRING" id="9913.ENSBTAP00000021892"/>
<dbReference type="PaxDb" id="9913-ENSBTAP00000021892"/>
<dbReference type="Ensembl" id="ENSBTAT00000021892.6">
    <property type="protein sequence ID" value="ENSBTAP00000021892.6"/>
    <property type="gene ID" value="ENSBTAG00000016465.7"/>
</dbReference>
<dbReference type="GeneID" id="514745"/>
<dbReference type="KEGG" id="bta:514745"/>
<dbReference type="CTD" id="1717"/>
<dbReference type="VEuPathDB" id="HostDB:ENSBTAG00000016465"/>
<dbReference type="VGNC" id="VGNC:28034">
    <property type="gene designation" value="DHCR7"/>
</dbReference>
<dbReference type="eggNOG" id="KOG1435">
    <property type="taxonomic scope" value="Eukaryota"/>
</dbReference>
<dbReference type="GeneTree" id="ENSGT00390000000417"/>
<dbReference type="InParanoid" id="Q5E9J5"/>
<dbReference type="OMA" id="KYGQYWA"/>
<dbReference type="OrthoDB" id="5326588at2759"/>
<dbReference type="Reactome" id="R-BTA-6807047">
    <property type="pathway name" value="Cholesterol biosynthesis via desmosterol"/>
</dbReference>
<dbReference type="Reactome" id="R-BTA-6807062">
    <property type="pathway name" value="Cholesterol biosynthesis via lathosterol"/>
</dbReference>
<dbReference type="UniPathway" id="UPA00063"/>
<dbReference type="Proteomes" id="UP000009136">
    <property type="component" value="Chromosome 29"/>
</dbReference>
<dbReference type="Bgee" id="ENSBTAG00000016465">
    <property type="expression patterns" value="Expressed in diaphragm and 107 other cell types or tissues"/>
</dbReference>
<dbReference type="GO" id="GO:0005789">
    <property type="term" value="C:endoplasmic reticulum membrane"/>
    <property type="evidence" value="ECO:0000318"/>
    <property type="project" value="GO_Central"/>
</dbReference>
<dbReference type="GO" id="GO:0005640">
    <property type="term" value="C:nuclear outer membrane"/>
    <property type="evidence" value="ECO:0007669"/>
    <property type="project" value="Ensembl"/>
</dbReference>
<dbReference type="GO" id="GO:0047598">
    <property type="term" value="F:7-dehydrocholesterol reductase activity"/>
    <property type="evidence" value="ECO:0000318"/>
    <property type="project" value="GO_Central"/>
</dbReference>
<dbReference type="GO" id="GO:0033963">
    <property type="term" value="F:cholesterol-5,6-oxide hydrolase activity"/>
    <property type="evidence" value="ECO:0000250"/>
    <property type="project" value="UniProtKB"/>
</dbReference>
<dbReference type="GO" id="GO:0050661">
    <property type="term" value="F:NADP binding"/>
    <property type="evidence" value="ECO:0000250"/>
    <property type="project" value="UniProtKB"/>
</dbReference>
<dbReference type="GO" id="GO:0006695">
    <property type="term" value="P:cholesterol biosynthetic process"/>
    <property type="evidence" value="ECO:0000318"/>
    <property type="project" value="GO_Central"/>
</dbReference>
<dbReference type="GO" id="GO:0033490">
    <property type="term" value="P:cholesterol biosynthetic process via lathosterol"/>
    <property type="evidence" value="ECO:0007669"/>
    <property type="project" value="Ensembl"/>
</dbReference>
<dbReference type="GO" id="GO:0160020">
    <property type="term" value="P:positive regulation of ferroptosis"/>
    <property type="evidence" value="ECO:0007669"/>
    <property type="project" value="Ensembl"/>
</dbReference>
<dbReference type="FunFam" id="1.20.120.1630:FF:000004">
    <property type="entry name" value="7-dehydrocholesterol reductase"/>
    <property type="match status" value="1"/>
</dbReference>
<dbReference type="Gene3D" id="1.20.120.1630">
    <property type="match status" value="1"/>
</dbReference>
<dbReference type="InterPro" id="IPR001171">
    <property type="entry name" value="ERG24_DHCR-like"/>
</dbReference>
<dbReference type="InterPro" id="IPR018083">
    <property type="entry name" value="Sterol_reductase_CS"/>
</dbReference>
<dbReference type="PANTHER" id="PTHR21257:SF38">
    <property type="entry name" value="7-DEHYDROCHOLESTEROL REDUCTASE"/>
    <property type="match status" value="1"/>
</dbReference>
<dbReference type="PANTHER" id="PTHR21257">
    <property type="entry name" value="DELTA(14)-STEROL REDUCTASE"/>
    <property type="match status" value="1"/>
</dbReference>
<dbReference type="Pfam" id="PF01222">
    <property type="entry name" value="ERG4_ERG24"/>
    <property type="match status" value="1"/>
</dbReference>
<dbReference type="PROSITE" id="PS01017">
    <property type="entry name" value="STEROL_REDUCT_1"/>
    <property type="match status" value="1"/>
</dbReference>
<dbReference type="PROSITE" id="PS01018">
    <property type="entry name" value="STEROL_REDUCT_2"/>
    <property type="match status" value="1"/>
</dbReference>
<protein>
    <recommendedName>
        <fullName evidence="3">7-dehydrocholesterol reductase</fullName>
        <shortName>7-DHC reductase</shortName>
        <ecNumber evidence="2">1.3.1.21</ecNumber>
    </recommendedName>
    <alternativeName>
        <fullName evidence="3">Cholesterol-5,6-epoxide hydrolase subunit DHCR7</fullName>
        <ecNumber evidence="3">3.3.2.11</ecNumber>
    </alternativeName>
    <alternativeName>
        <fullName>Sterol Delta(7)-reductase</fullName>
    </alternativeName>
</protein>
<keyword id="KW-0152">Cholesterol biosynthesis</keyword>
<keyword id="KW-0153">Cholesterol metabolism</keyword>
<keyword id="KW-0256">Endoplasmic reticulum</keyword>
<keyword id="KW-0378">Hydrolase</keyword>
<keyword id="KW-0444">Lipid biosynthesis</keyword>
<keyword id="KW-0443">Lipid metabolism</keyword>
<keyword id="KW-0472">Membrane</keyword>
<keyword id="KW-0521">NADP</keyword>
<keyword id="KW-0560">Oxidoreductase</keyword>
<keyword id="KW-0597">Phosphoprotein</keyword>
<keyword id="KW-1185">Reference proteome</keyword>
<keyword id="KW-0752">Steroid biosynthesis</keyword>
<keyword id="KW-0753">Steroid metabolism</keyword>
<keyword id="KW-0756">Sterol biosynthesis</keyword>
<keyword id="KW-1207">Sterol metabolism</keyword>
<keyword id="KW-0812">Transmembrane</keyword>
<keyword id="KW-1133">Transmembrane helix</keyword>